<dbReference type="EMBL" id="BA000033">
    <property type="protein sequence ID" value="BAB94585.1"/>
    <property type="molecule type" value="Genomic_DNA"/>
</dbReference>
<dbReference type="SMR" id="Q8NXM0"/>
<dbReference type="KEGG" id="sam:MW0720"/>
<dbReference type="HOGENOM" id="CLU_009621_2_1_9"/>
<dbReference type="GO" id="GO:0005737">
    <property type="term" value="C:cytoplasm"/>
    <property type="evidence" value="ECO:0007669"/>
    <property type="project" value="UniProtKB-SubCell"/>
</dbReference>
<dbReference type="GO" id="GO:0009380">
    <property type="term" value="C:excinuclease repair complex"/>
    <property type="evidence" value="ECO:0007669"/>
    <property type="project" value="InterPro"/>
</dbReference>
<dbReference type="GO" id="GO:0005524">
    <property type="term" value="F:ATP binding"/>
    <property type="evidence" value="ECO:0007669"/>
    <property type="project" value="UniProtKB-UniRule"/>
</dbReference>
<dbReference type="GO" id="GO:0016887">
    <property type="term" value="F:ATP hydrolysis activity"/>
    <property type="evidence" value="ECO:0007669"/>
    <property type="project" value="InterPro"/>
</dbReference>
<dbReference type="GO" id="GO:0003677">
    <property type="term" value="F:DNA binding"/>
    <property type="evidence" value="ECO:0007669"/>
    <property type="project" value="UniProtKB-UniRule"/>
</dbReference>
<dbReference type="GO" id="GO:0009381">
    <property type="term" value="F:excinuclease ABC activity"/>
    <property type="evidence" value="ECO:0007669"/>
    <property type="project" value="UniProtKB-UniRule"/>
</dbReference>
<dbReference type="GO" id="GO:0006289">
    <property type="term" value="P:nucleotide-excision repair"/>
    <property type="evidence" value="ECO:0007669"/>
    <property type="project" value="UniProtKB-UniRule"/>
</dbReference>
<dbReference type="GO" id="GO:0009432">
    <property type="term" value="P:SOS response"/>
    <property type="evidence" value="ECO:0007669"/>
    <property type="project" value="UniProtKB-UniRule"/>
</dbReference>
<dbReference type="CDD" id="cd17916">
    <property type="entry name" value="DEXHc_UvrB"/>
    <property type="match status" value="1"/>
</dbReference>
<dbReference type="CDD" id="cd18790">
    <property type="entry name" value="SF2_C_UvrB"/>
    <property type="match status" value="1"/>
</dbReference>
<dbReference type="Gene3D" id="3.40.50.300">
    <property type="entry name" value="P-loop containing nucleotide triphosphate hydrolases"/>
    <property type="match status" value="3"/>
</dbReference>
<dbReference type="Gene3D" id="4.10.860.10">
    <property type="entry name" value="UVR domain"/>
    <property type="match status" value="1"/>
</dbReference>
<dbReference type="HAMAP" id="MF_00204">
    <property type="entry name" value="UvrB"/>
    <property type="match status" value="1"/>
</dbReference>
<dbReference type="InterPro" id="IPR006935">
    <property type="entry name" value="Helicase/UvrB_N"/>
</dbReference>
<dbReference type="InterPro" id="IPR014001">
    <property type="entry name" value="Helicase_ATP-bd"/>
</dbReference>
<dbReference type="InterPro" id="IPR001650">
    <property type="entry name" value="Helicase_C-like"/>
</dbReference>
<dbReference type="InterPro" id="IPR027417">
    <property type="entry name" value="P-loop_NTPase"/>
</dbReference>
<dbReference type="InterPro" id="IPR001943">
    <property type="entry name" value="UVR_dom"/>
</dbReference>
<dbReference type="InterPro" id="IPR036876">
    <property type="entry name" value="UVR_dom_sf"/>
</dbReference>
<dbReference type="InterPro" id="IPR004807">
    <property type="entry name" value="UvrB"/>
</dbReference>
<dbReference type="InterPro" id="IPR041471">
    <property type="entry name" value="UvrB_inter"/>
</dbReference>
<dbReference type="InterPro" id="IPR024759">
    <property type="entry name" value="UvrB_YAD/RRR_dom"/>
</dbReference>
<dbReference type="NCBIfam" id="NF003673">
    <property type="entry name" value="PRK05298.1"/>
    <property type="match status" value="1"/>
</dbReference>
<dbReference type="NCBIfam" id="TIGR00631">
    <property type="entry name" value="uvrb"/>
    <property type="match status" value="1"/>
</dbReference>
<dbReference type="PANTHER" id="PTHR24029">
    <property type="entry name" value="UVRABC SYSTEM PROTEIN B"/>
    <property type="match status" value="1"/>
</dbReference>
<dbReference type="PANTHER" id="PTHR24029:SF0">
    <property type="entry name" value="UVRABC SYSTEM PROTEIN B"/>
    <property type="match status" value="1"/>
</dbReference>
<dbReference type="Pfam" id="PF00271">
    <property type="entry name" value="Helicase_C"/>
    <property type="match status" value="1"/>
</dbReference>
<dbReference type="Pfam" id="PF04851">
    <property type="entry name" value="ResIII"/>
    <property type="match status" value="1"/>
</dbReference>
<dbReference type="Pfam" id="PF02151">
    <property type="entry name" value="UVR"/>
    <property type="match status" value="1"/>
</dbReference>
<dbReference type="Pfam" id="PF12344">
    <property type="entry name" value="UvrB"/>
    <property type="match status" value="1"/>
</dbReference>
<dbReference type="Pfam" id="PF17757">
    <property type="entry name" value="UvrB_inter"/>
    <property type="match status" value="1"/>
</dbReference>
<dbReference type="SMART" id="SM00487">
    <property type="entry name" value="DEXDc"/>
    <property type="match status" value="1"/>
</dbReference>
<dbReference type="SMART" id="SM00490">
    <property type="entry name" value="HELICc"/>
    <property type="match status" value="1"/>
</dbReference>
<dbReference type="SUPFAM" id="SSF46600">
    <property type="entry name" value="C-terminal UvrC-binding domain of UvrB"/>
    <property type="match status" value="1"/>
</dbReference>
<dbReference type="SUPFAM" id="SSF52540">
    <property type="entry name" value="P-loop containing nucleoside triphosphate hydrolases"/>
    <property type="match status" value="2"/>
</dbReference>
<dbReference type="PROSITE" id="PS51192">
    <property type="entry name" value="HELICASE_ATP_BIND_1"/>
    <property type="match status" value="1"/>
</dbReference>
<dbReference type="PROSITE" id="PS51194">
    <property type="entry name" value="HELICASE_CTER"/>
    <property type="match status" value="1"/>
</dbReference>
<dbReference type="PROSITE" id="PS50151">
    <property type="entry name" value="UVR"/>
    <property type="match status" value="1"/>
</dbReference>
<comment type="function">
    <text evidence="1">The UvrABC repair system catalyzes the recognition and processing of DNA lesions. A damage recognition complex composed of 2 UvrA and 2 UvrB subunits scans DNA for abnormalities. Upon binding of the UvrA(2)B(2) complex to a putative damaged site, the DNA wraps around one UvrB monomer. DNA wrap is dependent on ATP binding by UvrB and probably causes local melting of the DNA helix, facilitating insertion of UvrB beta-hairpin between the DNA strands. Then UvrB probes one DNA strand for the presence of a lesion. If a lesion is found the UvrA subunits dissociate and the UvrB-DNA preincision complex is formed. This complex is subsequently bound by UvrC and the second UvrB is released. If no lesion is found, the DNA wraps around the other UvrB subunit that will check the other stand for damage.</text>
</comment>
<comment type="subunit">
    <text evidence="1">Forms a heterotetramer with UvrA during the search for lesions. Interacts with UvrC in an incision complex.</text>
</comment>
<comment type="subcellular location">
    <subcellularLocation>
        <location evidence="1">Cytoplasm</location>
    </subcellularLocation>
</comment>
<comment type="domain">
    <text evidence="1">The beta-hairpin motif is involved in DNA binding.</text>
</comment>
<comment type="similarity">
    <text evidence="1">Belongs to the UvrB family.</text>
</comment>
<reference key="1">
    <citation type="journal article" date="2002" name="Lancet">
        <title>Genome and virulence determinants of high virulence community-acquired MRSA.</title>
        <authorList>
            <person name="Baba T."/>
            <person name="Takeuchi F."/>
            <person name="Kuroda M."/>
            <person name="Yuzawa H."/>
            <person name="Aoki K."/>
            <person name="Oguchi A."/>
            <person name="Nagai Y."/>
            <person name="Iwama N."/>
            <person name="Asano K."/>
            <person name="Naimi T."/>
            <person name="Kuroda H."/>
            <person name="Cui L."/>
            <person name="Yamamoto K."/>
            <person name="Hiramatsu K."/>
        </authorList>
    </citation>
    <scope>NUCLEOTIDE SEQUENCE [LARGE SCALE GENOMIC DNA]</scope>
    <source>
        <strain>MW2</strain>
    </source>
</reference>
<gene>
    <name evidence="1" type="primary">uvrB</name>
    <name type="ordered locus">MW0720</name>
</gene>
<protein>
    <recommendedName>
        <fullName evidence="1">UvrABC system protein B</fullName>
        <shortName evidence="1">Protein UvrB</shortName>
    </recommendedName>
    <alternativeName>
        <fullName evidence="1">Excinuclease ABC subunit B</fullName>
    </alternativeName>
</protein>
<proteinExistence type="inferred from homology"/>
<feature type="chain" id="PRO_0000138429" description="UvrABC system protein B">
    <location>
        <begin position="1"/>
        <end position="663"/>
    </location>
</feature>
<feature type="domain" description="Helicase ATP-binding" evidence="1">
    <location>
        <begin position="30"/>
        <end position="414"/>
    </location>
</feature>
<feature type="domain" description="Helicase C-terminal" evidence="1">
    <location>
        <begin position="434"/>
        <end position="600"/>
    </location>
</feature>
<feature type="domain" description="UVR" evidence="1">
    <location>
        <begin position="627"/>
        <end position="662"/>
    </location>
</feature>
<feature type="short sequence motif" description="Beta-hairpin">
    <location>
        <begin position="96"/>
        <end position="119"/>
    </location>
</feature>
<feature type="binding site" evidence="1">
    <location>
        <begin position="43"/>
        <end position="50"/>
    </location>
    <ligand>
        <name>ATP</name>
        <dbReference type="ChEBI" id="CHEBI:30616"/>
    </ligand>
</feature>
<evidence type="ECO:0000255" key="1">
    <source>
        <dbReference type="HAMAP-Rule" id="MF_00204"/>
    </source>
</evidence>
<sequence>MTMVEHYPFKIHSDFEPQGDQPQAIEEIVEGIKAGKRHQTLLGATGTGKTFTMSNVIKEVGKPTLIIAHNKTLAGQLYSEFKEFFPENRVEYFVSYYDYYQPEAYVPSTDTFIEKDASINDEIDQLRHSATSALFERDDVIIIASVSCIYGLGNPEEYKDLVVSVRVGMEMDRSELLRKLVDVQYTRNDIDFQRGTFRVRGDVVEIFPASKEELCIRVEFFGDEIDRIREVNYLTGEVLKEREHFAIFPASHFVTREEKLKVAIERIEKELEERLKELRDENKLLEAQRLEQRTNYDLEMMREMGFCSGIENYSVHLTLRPLGSTPYTLLDYFGDDWLVMIDESHVTLPQVRGMYNGDRARKQVLVDHGFRLPSALDNRPLKFEEFEEKTKQLVYVSATPGPYEIEHTDKMVEQIIRPTGLLDPKIEVRPTENQIDDLLSEIQTRVERNERVLVTTLTKKMSEDLTTYMKEAGIKVNYLHSEIKTLERIEIIRDLRMGTYDVIVGINLLREGIDIPEVSLVVILDADKEGFLRSNRSLIQTIGRAARNDKGEVIMYADKMTDSMKYAIDETQRRREIQMKHNEKHGITPKTINKKIHDLISATVENDENNDKAQTVIPKKMTKKERQKTIDNIEKEMKQAAKDLDFEKATELRDMLFELKAEG</sequence>
<accession>Q8NXM0</accession>
<name>UVRB_STAAW</name>
<keyword id="KW-0067">ATP-binding</keyword>
<keyword id="KW-0963">Cytoplasm</keyword>
<keyword id="KW-0227">DNA damage</keyword>
<keyword id="KW-0228">DNA excision</keyword>
<keyword id="KW-0234">DNA repair</keyword>
<keyword id="KW-0267">Excision nuclease</keyword>
<keyword id="KW-0547">Nucleotide-binding</keyword>
<keyword id="KW-0742">SOS response</keyword>
<organism>
    <name type="scientific">Staphylococcus aureus (strain MW2)</name>
    <dbReference type="NCBI Taxonomy" id="196620"/>
    <lineage>
        <taxon>Bacteria</taxon>
        <taxon>Bacillati</taxon>
        <taxon>Bacillota</taxon>
        <taxon>Bacilli</taxon>
        <taxon>Bacillales</taxon>
        <taxon>Staphylococcaceae</taxon>
        <taxon>Staphylococcus</taxon>
    </lineage>
</organism>